<organism>
    <name type="scientific">Thermotoga petrophila (strain ATCC BAA-488 / DSM 13995 / JCM 10881 / RKU-1)</name>
    <dbReference type="NCBI Taxonomy" id="390874"/>
    <lineage>
        <taxon>Bacteria</taxon>
        <taxon>Thermotogati</taxon>
        <taxon>Thermotogota</taxon>
        <taxon>Thermotogae</taxon>
        <taxon>Thermotogales</taxon>
        <taxon>Thermotogaceae</taxon>
        <taxon>Thermotoga</taxon>
    </lineage>
</organism>
<protein>
    <recommendedName>
        <fullName evidence="1">Holliday junction branch migration complex subunit RuvB</fullName>
        <ecNumber evidence="1">3.6.4.-</ecNumber>
    </recommendedName>
</protein>
<dbReference type="EC" id="3.6.4.-" evidence="1"/>
<dbReference type="EMBL" id="CP000702">
    <property type="protein sequence ID" value="ABQ47043.1"/>
    <property type="molecule type" value="Genomic_DNA"/>
</dbReference>
<dbReference type="RefSeq" id="WP_011943578.1">
    <property type="nucleotide sequence ID" value="NC_009486.1"/>
</dbReference>
<dbReference type="SMR" id="A5ILH0"/>
<dbReference type="STRING" id="390874.Tpet_1025"/>
<dbReference type="KEGG" id="tpt:Tpet_1025"/>
<dbReference type="eggNOG" id="COG2255">
    <property type="taxonomic scope" value="Bacteria"/>
</dbReference>
<dbReference type="HOGENOM" id="CLU_055599_1_0_0"/>
<dbReference type="Proteomes" id="UP000006558">
    <property type="component" value="Chromosome"/>
</dbReference>
<dbReference type="GO" id="GO:0005737">
    <property type="term" value="C:cytoplasm"/>
    <property type="evidence" value="ECO:0007669"/>
    <property type="project" value="UniProtKB-SubCell"/>
</dbReference>
<dbReference type="GO" id="GO:0048476">
    <property type="term" value="C:Holliday junction resolvase complex"/>
    <property type="evidence" value="ECO:0007669"/>
    <property type="project" value="UniProtKB-UniRule"/>
</dbReference>
<dbReference type="GO" id="GO:0005524">
    <property type="term" value="F:ATP binding"/>
    <property type="evidence" value="ECO:0007669"/>
    <property type="project" value="UniProtKB-UniRule"/>
</dbReference>
<dbReference type="GO" id="GO:0016887">
    <property type="term" value="F:ATP hydrolysis activity"/>
    <property type="evidence" value="ECO:0007669"/>
    <property type="project" value="InterPro"/>
</dbReference>
<dbReference type="GO" id="GO:0000400">
    <property type="term" value="F:four-way junction DNA binding"/>
    <property type="evidence" value="ECO:0007669"/>
    <property type="project" value="UniProtKB-UniRule"/>
</dbReference>
<dbReference type="GO" id="GO:0009378">
    <property type="term" value="F:four-way junction helicase activity"/>
    <property type="evidence" value="ECO:0007669"/>
    <property type="project" value="InterPro"/>
</dbReference>
<dbReference type="GO" id="GO:0006310">
    <property type="term" value="P:DNA recombination"/>
    <property type="evidence" value="ECO:0007669"/>
    <property type="project" value="UniProtKB-UniRule"/>
</dbReference>
<dbReference type="GO" id="GO:0006281">
    <property type="term" value="P:DNA repair"/>
    <property type="evidence" value="ECO:0007669"/>
    <property type="project" value="UniProtKB-UniRule"/>
</dbReference>
<dbReference type="CDD" id="cd00009">
    <property type="entry name" value="AAA"/>
    <property type="match status" value="1"/>
</dbReference>
<dbReference type="Gene3D" id="1.10.8.60">
    <property type="match status" value="1"/>
</dbReference>
<dbReference type="Gene3D" id="3.40.50.300">
    <property type="entry name" value="P-loop containing nucleotide triphosphate hydrolases"/>
    <property type="match status" value="1"/>
</dbReference>
<dbReference type="Gene3D" id="1.10.10.10">
    <property type="entry name" value="Winged helix-like DNA-binding domain superfamily/Winged helix DNA-binding domain"/>
    <property type="match status" value="1"/>
</dbReference>
<dbReference type="HAMAP" id="MF_00016">
    <property type="entry name" value="DNA_HJ_migration_RuvB"/>
    <property type="match status" value="1"/>
</dbReference>
<dbReference type="InterPro" id="IPR003593">
    <property type="entry name" value="AAA+_ATPase"/>
</dbReference>
<dbReference type="InterPro" id="IPR041445">
    <property type="entry name" value="AAA_lid_4"/>
</dbReference>
<dbReference type="InterPro" id="IPR004605">
    <property type="entry name" value="DNA_helicase_Holl-junc_RuvB"/>
</dbReference>
<dbReference type="InterPro" id="IPR027417">
    <property type="entry name" value="P-loop_NTPase"/>
</dbReference>
<dbReference type="InterPro" id="IPR008824">
    <property type="entry name" value="RuvB-like_N"/>
</dbReference>
<dbReference type="InterPro" id="IPR008823">
    <property type="entry name" value="RuvB_C"/>
</dbReference>
<dbReference type="InterPro" id="IPR036388">
    <property type="entry name" value="WH-like_DNA-bd_sf"/>
</dbReference>
<dbReference type="InterPro" id="IPR036390">
    <property type="entry name" value="WH_DNA-bd_sf"/>
</dbReference>
<dbReference type="NCBIfam" id="NF000868">
    <property type="entry name" value="PRK00080.1"/>
    <property type="match status" value="1"/>
</dbReference>
<dbReference type="NCBIfam" id="TIGR00635">
    <property type="entry name" value="ruvB"/>
    <property type="match status" value="1"/>
</dbReference>
<dbReference type="PANTHER" id="PTHR42848">
    <property type="match status" value="1"/>
</dbReference>
<dbReference type="PANTHER" id="PTHR42848:SF1">
    <property type="entry name" value="HOLLIDAY JUNCTION BRANCH MIGRATION COMPLEX SUBUNIT RUVB"/>
    <property type="match status" value="1"/>
</dbReference>
<dbReference type="Pfam" id="PF17864">
    <property type="entry name" value="AAA_lid_4"/>
    <property type="match status" value="1"/>
</dbReference>
<dbReference type="Pfam" id="PF05491">
    <property type="entry name" value="RuvB_C"/>
    <property type="match status" value="1"/>
</dbReference>
<dbReference type="Pfam" id="PF05496">
    <property type="entry name" value="RuvB_N"/>
    <property type="match status" value="1"/>
</dbReference>
<dbReference type="SMART" id="SM00382">
    <property type="entry name" value="AAA"/>
    <property type="match status" value="1"/>
</dbReference>
<dbReference type="SUPFAM" id="SSF52540">
    <property type="entry name" value="P-loop containing nucleoside triphosphate hydrolases"/>
    <property type="match status" value="1"/>
</dbReference>
<dbReference type="SUPFAM" id="SSF46785">
    <property type="entry name" value="Winged helix' DNA-binding domain"/>
    <property type="match status" value="1"/>
</dbReference>
<name>RUVB_THEP1</name>
<proteinExistence type="inferred from homology"/>
<keyword id="KW-0067">ATP-binding</keyword>
<keyword id="KW-0963">Cytoplasm</keyword>
<keyword id="KW-0227">DNA damage</keyword>
<keyword id="KW-0233">DNA recombination</keyword>
<keyword id="KW-0234">DNA repair</keyword>
<keyword id="KW-0238">DNA-binding</keyword>
<keyword id="KW-0378">Hydrolase</keyword>
<keyword id="KW-0547">Nucleotide-binding</keyword>
<feature type="chain" id="PRO_1000001495" description="Holliday junction branch migration complex subunit RuvB">
    <location>
        <begin position="1"/>
        <end position="334"/>
    </location>
</feature>
<feature type="region of interest" description="Large ATPase domain (RuvB-L)" evidence="1">
    <location>
        <begin position="1"/>
        <end position="180"/>
    </location>
</feature>
<feature type="region of interest" description="Small ATPAse domain (RuvB-S)" evidence="1">
    <location>
        <begin position="181"/>
        <end position="251"/>
    </location>
</feature>
<feature type="region of interest" description="Head domain (RuvB-H)" evidence="1">
    <location>
        <begin position="254"/>
        <end position="334"/>
    </location>
</feature>
<feature type="binding site" evidence="1">
    <location>
        <position position="19"/>
    </location>
    <ligand>
        <name>ATP</name>
        <dbReference type="ChEBI" id="CHEBI:30616"/>
    </ligand>
</feature>
<feature type="binding site" evidence="1">
    <location>
        <position position="20"/>
    </location>
    <ligand>
        <name>ATP</name>
        <dbReference type="ChEBI" id="CHEBI:30616"/>
    </ligand>
</feature>
<feature type="binding site" evidence="1">
    <location>
        <position position="61"/>
    </location>
    <ligand>
        <name>ATP</name>
        <dbReference type="ChEBI" id="CHEBI:30616"/>
    </ligand>
</feature>
<feature type="binding site" evidence="1">
    <location>
        <position position="64"/>
    </location>
    <ligand>
        <name>ATP</name>
        <dbReference type="ChEBI" id="CHEBI:30616"/>
    </ligand>
</feature>
<feature type="binding site" evidence="1">
    <location>
        <position position="65"/>
    </location>
    <ligand>
        <name>ATP</name>
        <dbReference type="ChEBI" id="CHEBI:30616"/>
    </ligand>
</feature>
<feature type="binding site" evidence="1">
    <location>
        <position position="65"/>
    </location>
    <ligand>
        <name>Mg(2+)</name>
        <dbReference type="ChEBI" id="CHEBI:18420"/>
    </ligand>
</feature>
<feature type="binding site" evidence="1">
    <location>
        <position position="66"/>
    </location>
    <ligand>
        <name>ATP</name>
        <dbReference type="ChEBI" id="CHEBI:30616"/>
    </ligand>
</feature>
<feature type="binding site" evidence="1">
    <location>
        <begin position="127"/>
        <end position="129"/>
    </location>
    <ligand>
        <name>ATP</name>
        <dbReference type="ChEBI" id="CHEBI:30616"/>
    </ligand>
</feature>
<feature type="binding site" evidence="1">
    <location>
        <position position="170"/>
    </location>
    <ligand>
        <name>ATP</name>
        <dbReference type="ChEBI" id="CHEBI:30616"/>
    </ligand>
</feature>
<feature type="binding site" evidence="1">
    <location>
        <position position="180"/>
    </location>
    <ligand>
        <name>ATP</name>
        <dbReference type="ChEBI" id="CHEBI:30616"/>
    </ligand>
</feature>
<feature type="binding site" evidence="1">
    <location>
        <position position="217"/>
    </location>
    <ligand>
        <name>ATP</name>
        <dbReference type="ChEBI" id="CHEBI:30616"/>
    </ligand>
</feature>
<feature type="binding site" evidence="1">
    <location>
        <position position="309"/>
    </location>
    <ligand>
        <name>DNA</name>
        <dbReference type="ChEBI" id="CHEBI:16991"/>
    </ligand>
</feature>
<feature type="binding site" evidence="1">
    <location>
        <position position="314"/>
    </location>
    <ligand>
        <name>DNA</name>
        <dbReference type="ChEBI" id="CHEBI:16991"/>
    </ligand>
</feature>
<gene>
    <name evidence="1" type="primary">ruvB</name>
    <name type="ordered locus">Tpet_1025</name>
</gene>
<evidence type="ECO:0000255" key="1">
    <source>
        <dbReference type="HAMAP-Rule" id="MF_00016"/>
    </source>
</evidence>
<comment type="function">
    <text evidence="1">The RuvA-RuvB-RuvC complex processes Holliday junction (HJ) DNA during genetic recombination and DNA repair, while the RuvA-RuvB complex plays an important role in the rescue of blocked DNA replication forks via replication fork reversal (RFR). RuvA specifically binds to HJ cruciform DNA, conferring on it an open structure. The RuvB hexamer acts as an ATP-dependent pump, pulling dsDNA into and through the RuvAB complex. RuvB forms 2 homohexamers on either side of HJ DNA bound by 1 or 2 RuvA tetramers; 4 subunits per hexamer contact DNA at a time. Coordinated motions by a converter formed by DNA-disengaged RuvB subunits stimulates ATP hydrolysis and nucleotide exchange. Immobilization of the converter enables RuvB to convert the ATP-contained energy into a lever motion, pulling 2 nucleotides of DNA out of the RuvA tetramer per ATP hydrolyzed, thus driving DNA branch migration. The RuvB motors rotate together with the DNA substrate, which together with the progressing nucleotide cycle form the mechanistic basis for DNA recombination by continuous HJ branch migration. Branch migration allows RuvC to scan DNA until it finds its consensus sequence, where it cleaves and resolves cruciform DNA.</text>
</comment>
<comment type="catalytic activity">
    <reaction evidence="1">
        <text>ATP + H2O = ADP + phosphate + H(+)</text>
        <dbReference type="Rhea" id="RHEA:13065"/>
        <dbReference type="ChEBI" id="CHEBI:15377"/>
        <dbReference type="ChEBI" id="CHEBI:15378"/>
        <dbReference type="ChEBI" id="CHEBI:30616"/>
        <dbReference type="ChEBI" id="CHEBI:43474"/>
        <dbReference type="ChEBI" id="CHEBI:456216"/>
    </reaction>
</comment>
<comment type="subunit">
    <text evidence="1">Homohexamer. Forms an RuvA(8)-RuvB(12)-Holliday junction (HJ) complex. HJ DNA is sandwiched between 2 RuvA tetramers; dsDNA enters through RuvA and exits via RuvB. An RuvB hexamer assembles on each DNA strand where it exits the tetramer. Each RuvB hexamer is contacted by two RuvA subunits (via domain III) on 2 adjacent RuvB subunits; this complex drives branch migration. In the full resolvosome a probable DNA-RuvA(4)-RuvB(12)-RuvC(2) complex forms which resolves the HJ.</text>
</comment>
<comment type="subcellular location">
    <subcellularLocation>
        <location evidence="1">Cytoplasm</location>
    </subcellularLocation>
</comment>
<comment type="domain">
    <text evidence="1">Has 3 domains, the large (RuvB-L) and small ATPase (RuvB-S) domains and the C-terminal head (RuvB-H) domain. The head domain binds DNA, while the ATPase domains jointly bind ATP, ADP or are empty depending on the state of the subunit in the translocation cycle. During a single DNA translocation step the structure of each domain remains the same, but their relative positions change.</text>
</comment>
<comment type="similarity">
    <text evidence="1">Belongs to the RuvB family.</text>
</comment>
<reference key="1">
    <citation type="submission" date="2007-05" db="EMBL/GenBank/DDBJ databases">
        <title>Complete sequence of Thermotoga petrophila RKU-1.</title>
        <authorList>
            <consortium name="US DOE Joint Genome Institute"/>
            <person name="Copeland A."/>
            <person name="Lucas S."/>
            <person name="Lapidus A."/>
            <person name="Barry K."/>
            <person name="Glavina del Rio T."/>
            <person name="Dalin E."/>
            <person name="Tice H."/>
            <person name="Pitluck S."/>
            <person name="Sims D."/>
            <person name="Brettin T."/>
            <person name="Bruce D."/>
            <person name="Detter J.C."/>
            <person name="Han C."/>
            <person name="Tapia R."/>
            <person name="Schmutz J."/>
            <person name="Larimer F."/>
            <person name="Land M."/>
            <person name="Hauser L."/>
            <person name="Kyrpides N."/>
            <person name="Mikhailova N."/>
            <person name="Nelson K."/>
            <person name="Gogarten J.P."/>
            <person name="Noll K."/>
            <person name="Richardson P."/>
        </authorList>
    </citation>
    <scope>NUCLEOTIDE SEQUENCE [LARGE SCALE GENOMIC DNA]</scope>
    <source>
        <strain>ATCC BAA-488 / DSM 13995 / JCM 10881 / RKU-1</strain>
    </source>
</reference>
<sequence length="334" mass="37086">MSEFLTPERTVYDSGVQFLRPKSLDEFIGQENVKKKLSLALEAAKMRGEVLDHVLLAGPPGLGKTTLAHIIASELQTNIHVTSGPVLVKQGDMAAILTSLERGDVLFIDEIHRLNKAVEELLYSAIEDFQIDIMIGKGPSAKSIRIDIQPFTLVGATTRSGLLSSPLRSRFGIILELDFYTVKELKEIIKRAASLMDVEIEDSAAEMIAKRSRGTPRIAIRLTKRVRDMLTVVKADRINTDIVLKTMEVLNIDAEGLDEFDRKILKTIIEIYRGGPVGLNALAASLGVEADTLSEVYEPYLLQAGFLARTPRGRVATEKAYKHLKYEVPENRLF</sequence>
<accession>A5ILH0</accession>